<accession>A9FI43</accession>
<protein>
    <recommendedName>
        <fullName evidence="1">Phospho-N-acetylmuramoyl-pentapeptide-transferase</fullName>
        <ecNumber evidence="1">2.7.8.13</ecNumber>
    </recommendedName>
    <alternativeName>
        <fullName evidence="1">UDP-MurNAc-pentapeptide phosphotransferase</fullName>
    </alternativeName>
</protein>
<dbReference type="EC" id="2.7.8.13" evidence="1"/>
<dbReference type="EMBL" id="AM746676">
    <property type="protein sequence ID" value="CAN91819.1"/>
    <property type="molecule type" value="Genomic_DNA"/>
</dbReference>
<dbReference type="RefSeq" id="WP_012234296.1">
    <property type="nucleotide sequence ID" value="NC_010162.1"/>
</dbReference>
<dbReference type="SMR" id="A9FI43"/>
<dbReference type="STRING" id="448385.sce1661"/>
<dbReference type="KEGG" id="scl:sce1661"/>
<dbReference type="eggNOG" id="COG0472">
    <property type="taxonomic scope" value="Bacteria"/>
</dbReference>
<dbReference type="HOGENOM" id="CLU_023982_0_0_7"/>
<dbReference type="OrthoDB" id="9805475at2"/>
<dbReference type="BioCyc" id="SCEL448385:SCE_RS08550-MONOMER"/>
<dbReference type="UniPathway" id="UPA00219"/>
<dbReference type="Proteomes" id="UP000002139">
    <property type="component" value="Chromosome"/>
</dbReference>
<dbReference type="GO" id="GO:0005886">
    <property type="term" value="C:plasma membrane"/>
    <property type="evidence" value="ECO:0007669"/>
    <property type="project" value="UniProtKB-SubCell"/>
</dbReference>
<dbReference type="GO" id="GO:0046872">
    <property type="term" value="F:metal ion binding"/>
    <property type="evidence" value="ECO:0007669"/>
    <property type="project" value="UniProtKB-KW"/>
</dbReference>
<dbReference type="GO" id="GO:0008963">
    <property type="term" value="F:phospho-N-acetylmuramoyl-pentapeptide-transferase activity"/>
    <property type="evidence" value="ECO:0007669"/>
    <property type="project" value="UniProtKB-UniRule"/>
</dbReference>
<dbReference type="GO" id="GO:0051992">
    <property type="term" value="F:UDP-N-acetylmuramoyl-L-alanyl-D-glutamyl-meso-2,6-diaminopimelyl-D-alanyl-D-alanine:undecaprenyl-phosphate transferase activity"/>
    <property type="evidence" value="ECO:0007669"/>
    <property type="project" value="RHEA"/>
</dbReference>
<dbReference type="GO" id="GO:0051301">
    <property type="term" value="P:cell division"/>
    <property type="evidence" value="ECO:0007669"/>
    <property type="project" value="UniProtKB-KW"/>
</dbReference>
<dbReference type="GO" id="GO:0071555">
    <property type="term" value="P:cell wall organization"/>
    <property type="evidence" value="ECO:0007669"/>
    <property type="project" value="UniProtKB-KW"/>
</dbReference>
<dbReference type="GO" id="GO:0009252">
    <property type="term" value="P:peptidoglycan biosynthetic process"/>
    <property type="evidence" value="ECO:0007669"/>
    <property type="project" value="UniProtKB-UniRule"/>
</dbReference>
<dbReference type="GO" id="GO:0008360">
    <property type="term" value="P:regulation of cell shape"/>
    <property type="evidence" value="ECO:0007669"/>
    <property type="project" value="UniProtKB-KW"/>
</dbReference>
<dbReference type="CDD" id="cd06852">
    <property type="entry name" value="GT_MraY"/>
    <property type="match status" value="1"/>
</dbReference>
<dbReference type="HAMAP" id="MF_00038">
    <property type="entry name" value="MraY"/>
    <property type="match status" value="1"/>
</dbReference>
<dbReference type="InterPro" id="IPR000715">
    <property type="entry name" value="Glycosyl_transferase_4"/>
</dbReference>
<dbReference type="InterPro" id="IPR003524">
    <property type="entry name" value="PNAcMuramoyl-5peptid_Trfase"/>
</dbReference>
<dbReference type="InterPro" id="IPR018480">
    <property type="entry name" value="PNAcMuramoyl-5peptid_Trfase_CS"/>
</dbReference>
<dbReference type="NCBIfam" id="TIGR00445">
    <property type="entry name" value="mraY"/>
    <property type="match status" value="1"/>
</dbReference>
<dbReference type="PANTHER" id="PTHR22926">
    <property type="entry name" value="PHOSPHO-N-ACETYLMURAMOYL-PENTAPEPTIDE-TRANSFERASE"/>
    <property type="match status" value="1"/>
</dbReference>
<dbReference type="PANTHER" id="PTHR22926:SF5">
    <property type="entry name" value="PHOSPHO-N-ACETYLMURAMOYL-PENTAPEPTIDE-TRANSFERASE HOMOLOG"/>
    <property type="match status" value="1"/>
</dbReference>
<dbReference type="Pfam" id="PF00953">
    <property type="entry name" value="Glycos_transf_4"/>
    <property type="match status" value="1"/>
</dbReference>
<dbReference type="Pfam" id="PF10555">
    <property type="entry name" value="MraY_sig1"/>
    <property type="match status" value="1"/>
</dbReference>
<dbReference type="PROSITE" id="PS01347">
    <property type="entry name" value="MRAY_1"/>
    <property type="match status" value="1"/>
</dbReference>
<dbReference type="PROSITE" id="PS01348">
    <property type="entry name" value="MRAY_2"/>
    <property type="match status" value="1"/>
</dbReference>
<name>MRAY_SORC5</name>
<evidence type="ECO:0000255" key="1">
    <source>
        <dbReference type="HAMAP-Rule" id="MF_00038"/>
    </source>
</evidence>
<feature type="chain" id="PRO_0000332547" description="Phospho-N-acetylmuramoyl-pentapeptide-transferase">
    <location>
        <begin position="1"/>
        <end position="376"/>
    </location>
</feature>
<feature type="transmembrane region" description="Helical" evidence="1">
    <location>
        <begin position="28"/>
        <end position="48"/>
    </location>
</feature>
<feature type="transmembrane region" description="Helical" evidence="1">
    <location>
        <begin position="76"/>
        <end position="96"/>
    </location>
</feature>
<feature type="transmembrane region" description="Helical" evidence="1">
    <location>
        <begin position="100"/>
        <end position="120"/>
    </location>
</feature>
<feature type="transmembrane region" description="Helical" evidence="1">
    <location>
        <begin position="135"/>
        <end position="155"/>
    </location>
</feature>
<feature type="transmembrane region" description="Helical" evidence="1">
    <location>
        <begin position="179"/>
        <end position="199"/>
    </location>
</feature>
<feature type="transmembrane region" description="Helical" evidence="1">
    <location>
        <begin position="211"/>
        <end position="231"/>
    </location>
</feature>
<feature type="transmembrane region" description="Helical" evidence="1">
    <location>
        <begin position="252"/>
        <end position="272"/>
    </location>
</feature>
<feature type="transmembrane region" description="Helical" evidence="1">
    <location>
        <begin position="279"/>
        <end position="299"/>
    </location>
</feature>
<feature type="transmembrane region" description="Helical" evidence="1">
    <location>
        <begin position="307"/>
        <end position="327"/>
    </location>
</feature>
<feature type="transmembrane region" description="Helical" evidence="1">
    <location>
        <begin position="353"/>
        <end position="373"/>
    </location>
</feature>
<proteinExistence type="inferred from homology"/>
<gene>
    <name evidence="1" type="primary">mraY</name>
    <name type="ordered locus">sce1661</name>
</gene>
<reference key="1">
    <citation type="journal article" date="2007" name="Nat. Biotechnol.">
        <title>Complete genome sequence of the myxobacterium Sorangium cellulosum.</title>
        <authorList>
            <person name="Schneiker S."/>
            <person name="Perlova O."/>
            <person name="Kaiser O."/>
            <person name="Gerth K."/>
            <person name="Alici A."/>
            <person name="Altmeyer M.O."/>
            <person name="Bartels D."/>
            <person name="Bekel T."/>
            <person name="Beyer S."/>
            <person name="Bode E."/>
            <person name="Bode H.B."/>
            <person name="Bolten C.J."/>
            <person name="Choudhuri J.V."/>
            <person name="Doss S."/>
            <person name="Elnakady Y.A."/>
            <person name="Frank B."/>
            <person name="Gaigalat L."/>
            <person name="Goesmann A."/>
            <person name="Groeger C."/>
            <person name="Gross F."/>
            <person name="Jelsbak L."/>
            <person name="Jelsbak L."/>
            <person name="Kalinowski J."/>
            <person name="Kegler C."/>
            <person name="Knauber T."/>
            <person name="Konietzny S."/>
            <person name="Kopp M."/>
            <person name="Krause L."/>
            <person name="Krug D."/>
            <person name="Linke B."/>
            <person name="Mahmud T."/>
            <person name="Martinez-Arias R."/>
            <person name="McHardy A.C."/>
            <person name="Merai M."/>
            <person name="Meyer F."/>
            <person name="Mormann S."/>
            <person name="Munoz-Dorado J."/>
            <person name="Perez J."/>
            <person name="Pradella S."/>
            <person name="Rachid S."/>
            <person name="Raddatz G."/>
            <person name="Rosenau F."/>
            <person name="Rueckert C."/>
            <person name="Sasse F."/>
            <person name="Scharfe M."/>
            <person name="Schuster S.C."/>
            <person name="Suen G."/>
            <person name="Treuner-Lange A."/>
            <person name="Velicer G.J."/>
            <person name="Vorholter F.-J."/>
            <person name="Weissman K.J."/>
            <person name="Welch R.D."/>
            <person name="Wenzel S.C."/>
            <person name="Whitworth D.E."/>
            <person name="Wilhelm S."/>
            <person name="Wittmann C."/>
            <person name="Bloecker H."/>
            <person name="Puehler A."/>
            <person name="Mueller R."/>
        </authorList>
    </citation>
    <scope>NUCLEOTIDE SEQUENCE [LARGE SCALE GENOMIC DNA]</scope>
    <source>
        <strain>So ce56</strain>
    </source>
</reference>
<keyword id="KW-0131">Cell cycle</keyword>
<keyword id="KW-0132">Cell division</keyword>
<keyword id="KW-0997">Cell inner membrane</keyword>
<keyword id="KW-1003">Cell membrane</keyword>
<keyword id="KW-0133">Cell shape</keyword>
<keyword id="KW-0961">Cell wall biogenesis/degradation</keyword>
<keyword id="KW-0460">Magnesium</keyword>
<keyword id="KW-0472">Membrane</keyword>
<keyword id="KW-0479">Metal-binding</keyword>
<keyword id="KW-0573">Peptidoglycan synthesis</keyword>
<keyword id="KW-1185">Reference proteome</keyword>
<keyword id="KW-0808">Transferase</keyword>
<keyword id="KW-0812">Transmembrane</keyword>
<keyword id="KW-1133">Transmembrane helix</keyword>
<organism>
    <name type="scientific">Sorangium cellulosum (strain So ce56)</name>
    <name type="common">Polyangium cellulosum (strain So ce56)</name>
    <dbReference type="NCBI Taxonomy" id="448385"/>
    <lineage>
        <taxon>Bacteria</taxon>
        <taxon>Pseudomonadati</taxon>
        <taxon>Myxococcota</taxon>
        <taxon>Polyangia</taxon>
        <taxon>Polyangiales</taxon>
        <taxon>Polyangiaceae</taxon>
        <taxon>Sorangium</taxon>
    </lineage>
</organism>
<sequence>MIYELFYPLKFHYGWLSWLNVLRYIPFRTIMATITAMVLTFVLAPWFIRELRRKQIGQVVRAEGPETHKIKAGTPTMGGALILLSLLLPTVLWADLRNPFVLATTAVTAGYGVIGYLDDFLKIKRRNSGGLPGRYKLIGQVLIGGAAVAYTFLLASKLPPDWAEIRTRLAIPFVAFSKYPIELPLYVYIPFAVFVVVATSNAVNLTDGLDGLAIGPVIINAGTYLILAYIVGASIASFSLATYLDIPAIASAGELSVYCGSVIGAGIGFLWYNTYPAQVFMGDVGSLALGGGLGMLAVFTKNELLSIILGGIFFIETVSVITQVLSFKLTGKRVFLMAPIHHHYEKKGWAEPKIIVRFWIISILLALVSLASMKLR</sequence>
<comment type="function">
    <text evidence="1">Catalyzes the initial step of the lipid cycle reactions in the biosynthesis of the cell wall peptidoglycan: transfers peptidoglycan precursor phospho-MurNAc-pentapeptide from UDP-MurNAc-pentapeptide onto the lipid carrier undecaprenyl phosphate, yielding undecaprenyl-pyrophosphoryl-MurNAc-pentapeptide, known as lipid I.</text>
</comment>
<comment type="catalytic activity">
    <reaction evidence="1">
        <text>UDP-N-acetyl-alpha-D-muramoyl-L-alanyl-gamma-D-glutamyl-meso-2,6-diaminopimeloyl-D-alanyl-D-alanine + di-trans,octa-cis-undecaprenyl phosphate = di-trans,octa-cis-undecaprenyl diphospho-N-acetyl-alpha-D-muramoyl-L-alanyl-D-glutamyl-meso-2,6-diaminopimeloyl-D-alanyl-D-alanine + UMP</text>
        <dbReference type="Rhea" id="RHEA:28386"/>
        <dbReference type="ChEBI" id="CHEBI:57865"/>
        <dbReference type="ChEBI" id="CHEBI:60392"/>
        <dbReference type="ChEBI" id="CHEBI:61386"/>
        <dbReference type="ChEBI" id="CHEBI:61387"/>
        <dbReference type="EC" id="2.7.8.13"/>
    </reaction>
</comment>
<comment type="cofactor">
    <cofactor evidence="1">
        <name>Mg(2+)</name>
        <dbReference type="ChEBI" id="CHEBI:18420"/>
    </cofactor>
</comment>
<comment type="pathway">
    <text evidence="1">Cell wall biogenesis; peptidoglycan biosynthesis.</text>
</comment>
<comment type="subcellular location">
    <subcellularLocation>
        <location evidence="1">Cell inner membrane</location>
        <topology evidence="1">Multi-pass membrane protein</topology>
    </subcellularLocation>
</comment>
<comment type="similarity">
    <text evidence="1">Belongs to the glycosyltransferase 4 family. MraY subfamily.</text>
</comment>